<organism>
    <name type="scientific">Delftia acidovorans (strain DSM 14801 / SPH-1)</name>
    <dbReference type="NCBI Taxonomy" id="398578"/>
    <lineage>
        <taxon>Bacteria</taxon>
        <taxon>Pseudomonadati</taxon>
        <taxon>Pseudomonadota</taxon>
        <taxon>Betaproteobacteria</taxon>
        <taxon>Burkholderiales</taxon>
        <taxon>Comamonadaceae</taxon>
        <taxon>Delftia</taxon>
    </lineage>
</organism>
<keyword id="KW-0030">Aminoacyl-tRNA synthetase</keyword>
<keyword id="KW-0067">ATP-binding</keyword>
<keyword id="KW-0963">Cytoplasm</keyword>
<keyword id="KW-0436">Ligase</keyword>
<keyword id="KW-0547">Nucleotide-binding</keyword>
<keyword id="KW-0648">Protein biosynthesis</keyword>
<keyword id="KW-1185">Reference proteome</keyword>
<dbReference type="EC" id="6.1.1.19" evidence="1"/>
<dbReference type="EMBL" id="CP000884">
    <property type="protein sequence ID" value="ABX33315.1"/>
    <property type="molecule type" value="Genomic_DNA"/>
</dbReference>
<dbReference type="RefSeq" id="WP_012202601.1">
    <property type="nucleotide sequence ID" value="NC_010002.1"/>
</dbReference>
<dbReference type="SMR" id="A9BRF4"/>
<dbReference type="STRING" id="398578.Daci_0669"/>
<dbReference type="GeneID" id="24116632"/>
<dbReference type="KEGG" id="dac:Daci_0669"/>
<dbReference type="eggNOG" id="COG0018">
    <property type="taxonomic scope" value="Bacteria"/>
</dbReference>
<dbReference type="HOGENOM" id="CLU_006406_0_1_4"/>
<dbReference type="Proteomes" id="UP000000784">
    <property type="component" value="Chromosome"/>
</dbReference>
<dbReference type="GO" id="GO:0005737">
    <property type="term" value="C:cytoplasm"/>
    <property type="evidence" value="ECO:0007669"/>
    <property type="project" value="UniProtKB-SubCell"/>
</dbReference>
<dbReference type="GO" id="GO:0004814">
    <property type="term" value="F:arginine-tRNA ligase activity"/>
    <property type="evidence" value="ECO:0007669"/>
    <property type="project" value="UniProtKB-UniRule"/>
</dbReference>
<dbReference type="GO" id="GO:0005524">
    <property type="term" value="F:ATP binding"/>
    <property type="evidence" value="ECO:0007669"/>
    <property type="project" value="UniProtKB-UniRule"/>
</dbReference>
<dbReference type="GO" id="GO:0006420">
    <property type="term" value="P:arginyl-tRNA aminoacylation"/>
    <property type="evidence" value="ECO:0007669"/>
    <property type="project" value="UniProtKB-UniRule"/>
</dbReference>
<dbReference type="CDD" id="cd07956">
    <property type="entry name" value="Anticodon_Ia_Arg"/>
    <property type="match status" value="1"/>
</dbReference>
<dbReference type="CDD" id="cd00671">
    <property type="entry name" value="ArgRS_core"/>
    <property type="match status" value="1"/>
</dbReference>
<dbReference type="FunFam" id="1.10.730.10:FF:000008">
    <property type="entry name" value="Arginine--tRNA ligase"/>
    <property type="match status" value="1"/>
</dbReference>
<dbReference type="FunFam" id="3.40.50.620:FF:000062">
    <property type="entry name" value="Arginine--tRNA ligase"/>
    <property type="match status" value="1"/>
</dbReference>
<dbReference type="Gene3D" id="3.30.1360.70">
    <property type="entry name" value="Arginyl tRNA synthetase N-terminal domain"/>
    <property type="match status" value="1"/>
</dbReference>
<dbReference type="Gene3D" id="3.40.50.620">
    <property type="entry name" value="HUPs"/>
    <property type="match status" value="1"/>
</dbReference>
<dbReference type="Gene3D" id="1.10.730.10">
    <property type="entry name" value="Isoleucyl-tRNA Synthetase, Domain 1"/>
    <property type="match status" value="1"/>
</dbReference>
<dbReference type="HAMAP" id="MF_00123">
    <property type="entry name" value="Arg_tRNA_synth"/>
    <property type="match status" value="1"/>
</dbReference>
<dbReference type="InterPro" id="IPR001412">
    <property type="entry name" value="aa-tRNA-synth_I_CS"/>
</dbReference>
<dbReference type="InterPro" id="IPR001278">
    <property type="entry name" value="Arg-tRNA-ligase"/>
</dbReference>
<dbReference type="InterPro" id="IPR005148">
    <property type="entry name" value="Arg-tRNA-synth_N"/>
</dbReference>
<dbReference type="InterPro" id="IPR036695">
    <property type="entry name" value="Arg-tRNA-synth_N_sf"/>
</dbReference>
<dbReference type="InterPro" id="IPR035684">
    <property type="entry name" value="ArgRS_core"/>
</dbReference>
<dbReference type="InterPro" id="IPR008909">
    <property type="entry name" value="DALR_anticod-bd"/>
</dbReference>
<dbReference type="InterPro" id="IPR014729">
    <property type="entry name" value="Rossmann-like_a/b/a_fold"/>
</dbReference>
<dbReference type="InterPro" id="IPR009080">
    <property type="entry name" value="tRNAsynth_Ia_anticodon-bd"/>
</dbReference>
<dbReference type="NCBIfam" id="TIGR00456">
    <property type="entry name" value="argS"/>
    <property type="match status" value="1"/>
</dbReference>
<dbReference type="PANTHER" id="PTHR11956:SF5">
    <property type="entry name" value="ARGININE--TRNA LIGASE, CYTOPLASMIC"/>
    <property type="match status" value="1"/>
</dbReference>
<dbReference type="PANTHER" id="PTHR11956">
    <property type="entry name" value="ARGINYL-TRNA SYNTHETASE"/>
    <property type="match status" value="1"/>
</dbReference>
<dbReference type="Pfam" id="PF03485">
    <property type="entry name" value="Arg_tRNA_synt_N"/>
    <property type="match status" value="1"/>
</dbReference>
<dbReference type="Pfam" id="PF05746">
    <property type="entry name" value="DALR_1"/>
    <property type="match status" value="1"/>
</dbReference>
<dbReference type="Pfam" id="PF00750">
    <property type="entry name" value="tRNA-synt_1d"/>
    <property type="match status" value="1"/>
</dbReference>
<dbReference type="PRINTS" id="PR01038">
    <property type="entry name" value="TRNASYNTHARG"/>
</dbReference>
<dbReference type="SMART" id="SM01016">
    <property type="entry name" value="Arg_tRNA_synt_N"/>
    <property type="match status" value="1"/>
</dbReference>
<dbReference type="SMART" id="SM00836">
    <property type="entry name" value="DALR_1"/>
    <property type="match status" value="1"/>
</dbReference>
<dbReference type="SUPFAM" id="SSF47323">
    <property type="entry name" value="Anticodon-binding domain of a subclass of class I aminoacyl-tRNA synthetases"/>
    <property type="match status" value="1"/>
</dbReference>
<dbReference type="SUPFAM" id="SSF55190">
    <property type="entry name" value="Arginyl-tRNA synthetase (ArgRS), N-terminal 'additional' domain"/>
    <property type="match status" value="1"/>
</dbReference>
<dbReference type="SUPFAM" id="SSF52374">
    <property type="entry name" value="Nucleotidylyl transferase"/>
    <property type="match status" value="1"/>
</dbReference>
<dbReference type="PROSITE" id="PS00178">
    <property type="entry name" value="AA_TRNA_LIGASE_I"/>
    <property type="match status" value="1"/>
</dbReference>
<proteinExistence type="inferred from homology"/>
<protein>
    <recommendedName>
        <fullName evidence="1">Arginine--tRNA ligase</fullName>
        <ecNumber evidence="1">6.1.1.19</ecNumber>
    </recommendedName>
    <alternativeName>
        <fullName evidence="1">Arginyl-tRNA synthetase</fullName>
        <shortName evidence="1">ArgRS</shortName>
    </alternativeName>
</protein>
<name>SYR_DELAS</name>
<sequence length="565" mass="62537">MLSVKQELLAALAGELETLSPGAGARAAFESPKVAAHGDFACTAAMQLAKPLKLNPRSLGEQLKAALEATPSFQRWVDAIEIAGPGFLNIRLKPAAKQQIIREVLEQAEKFGWLADRGAKMLVEFVSANPTGPLHVGHGRQAALGDAICNLYATQGWGVHREFYYNDAGVQIDTLTKSTQLRAKGFKPGDECWPIDPENPASKAFYNGSYIQDIADDFLACKTVKADDREFTANGDVEDYDNIRQFAVAYLRNEQDKDLQAFNLHFDEYYLESSLYTNGYVEDAVQRLIAGGHTYELDGALWLKSTDYGDDKDRVMRKQDGNYTYFVPDVAYHIQKFKRGYSKVVNIQGTDHHGTIARVRAGLQAADVGIPAGYPDYVLHTMVRVVRGGEEVKISKRAGSYVTLRDLIEWTSKDAVRFFLLSRKPDTEYTFDVDLAVAQNNDNPVYYVQYAHARICSVLAAWGGDAATLKDVDLSALEGPQAQALMLQLAKYPAMLTSAAEGNAPHDVTFYLRELASLYHSYYDAERILVDDEKVKLARLALISATRQVLHNGLAVLGVSAPQRM</sequence>
<comment type="catalytic activity">
    <reaction evidence="1">
        <text>tRNA(Arg) + L-arginine + ATP = L-arginyl-tRNA(Arg) + AMP + diphosphate</text>
        <dbReference type="Rhea" id="RHEA:20301"/>
        <dbReference type="Rhea" id="RHEA-COMP:9658"/>
        <dbReference type="Rhea" id="RHEA-COMP:9673"/>
        <dbReference type="ChEBI" id="CHEBI:30616"/>
        <dbReference type="ChEBI" id="CHEBI:32682"/>
        <dbReference type="ChEBI" id="CHEBI:33019"/>
        <dbReference type="ChEBI" id="CHEBI:78442"/>
        <dbReference type="ChEBI" id="CHEBI:78513"/>
        <dbReference type="ChEBI" id="CHEBI:456215"/>
        <dbReference type="EC" id="6.1.1.19"/>
    </reaction>
</comment>
<comment type="subunit">
    <text evidence="1">Monomer.</text>
</comment>
<comment type="subcellular location">
    <subcellularLocation>
        <location evidence="1">Cytoplasm</location>
    </subcellularLocation>
</comment>
<comment type="similarity">
    <text evidence="1">Belongs to the class-I aminoacyl-tRNA synthetase family.</text>
</comment>
<gene>
    <name evidence="1" type="primary">argS</name>
    <name type="ordered locus">Daci_0669</name>
</gene>
<accession>A9BRF4</accession>
<feature type="chain" id="PRO_1000095358" description="Arginine--tRNA ligase">
    <location>
        <begin position="1"/>
        <end position="565"/>
    </location>
</feature>
<feature type="short sequence motif" description="'HIGH' region">
    <location>
        <begin position="128"/>
        <end position="138"/>
    </location>
</feature>
<reference key="1">
    <citation type="submission" date="2007-11" db="EMBL/GenBank/DDBJ databases">
        <title>Complete sequence of Delftia acidovorans DSM 14801 / SPH-1.</title>
        <authorList>
            <person name="Copeland A."/>
            <person name="Lucas S."/>
            <person name="Lapidus A."/>
            <person name="Barry K."/>
            <person name="Glavina del Rio T."/>
            <person name="Dalin E."/>
            <person name="Tice H."/>
            <person name="Pitluck S."/>
            <person name="Lowry S."/>
            <person name="Clum A."/>
            <person name="Schmutz J."/>
            <person name="Larimer F."/>
            <person name="Land M."/>
            <person name="Hauser L."/>
            <person name="Kyrpides N."/>
            <person name="Kim E."/>
            <person name="Schleheck D."/>
            <person name="Richardson P."/>
        </authorList>
    </citation>
    <scope>NUCLEOTIDE SEQUENCE [LARGE SCALE GENOMIC DNA]</scope>
    <source>
        <strain>DSM 14801 / SPH-1</strain>
    </source>
</reference>
<evidence type="ECO:0000255" key="1">
    <source>
        <dbReference type="HAMAP-Rule" id="MF_00123"/>
    </source>
</evidence>